<organism>
    <name type="scientific">Serratia proteamaculans (strain 568)</name>
    <dbReference type="NCBI Taxonomy" id="399741"/>
    <lineage>
        <taxon>Bacteria</taxon>
        <taxon>Pseudomonadati</taxon>
        <taxon>Pseudomonadota</taxon>
        <taxon>Gammaproteobacteria</taxon>
        <taxon>Enterobacterales</taxon>
        <taxon>Yersiniaceae</taxon>
        <taxon>Serratia</taxon>
    </lineage>
</organism>
<reference key="1">
    <citation type="submission" date="2007-09" db="EMBL/GenBank/DDBJ databases">
        <title>Complete sequence of chromosome of Serratia proteamaculans 568.</title>
        <authorList>
            <consortium name="US DOE Joint Genome Institute"/>
            <person name="Copeland A."/>
            <person name="Lucas S."/>
            <person name="Lapidus A."/>
            <person name="Barry K."/>
            <person name="Glavina del Rio T."/>
            <person name="Dalin E."/>
            <person name="Tice H."/>
            <person name="Pitluck S."/>
            <person name="Chain P."/>
            <person name="Malfatti S."/>
            <person name="Shin M."/>
            <person name="Vergez L."/>
            <person name="Schmutz J."/>
            <person name="Larimer F."/>
            <person name="Land M."/>
            <person name="Hauser L."/>
            <person name="Kyrpides N."/>
            <person name="Kim E."/>
            <person name="Taghavi S."/>
            <person name="Newman L."/>
            <person name="Vangronsveld J."/>
            <person name="van der Lelie D."/>
            <person name="Richardson P."/>
        </authorList>
    </citation>
    <scope>NUCLEOTIDE SEQUENCE [LARGE SCALE GENOMIC DNA]</scope>
    <source>
        <strain>568</strain>
    </source>
</reference>
<accession>A8GB21</accession>
<gene>
    <name evidence="1" type="primary">leuS</name>
    <name type="ordered locus">Spro_1207</name>
</gene>
<protein>
    <recommendedName>
        <fullName evidence="1">Leucine--tRNA ligase</fullName>
        <ecNumber evidence="1">6.1.1.4</ecNumber>
    </recommendedName>
    <alternativeName>
        <fullName evidence="1">Leucyl-tRNA synthetase</fullName>
        <shortName evidence="1">LeuRS</shortName>
    </alternativeName>
</protein>
<name>SYL_SERP5</name>
<keyword id="KW-0030">Aminoacyl-tRNA synthetase</keyword>
<keyword id="KW-0067">ATP-binding</keyword>
<keyword id="KW-0963">Cytoplasm</keyword>
<keyword id="KW-0436">Ligase</keyword>
<keyword id="KW-0547">Nucleotide-binding</keyword>
<keyword id="KW-0648">Protein biosynthesis</keyword>
<comment type="catalytic activity">
    <reaction evidence="1">
        <text>tRNA(Leu) + L-leucine + ATP = L-leucyl-tRNA(Leu) + AMP + diphosphate</text>
        <dbReference type="Rhea" id="RHEA:11688"/>
        <dbReference type="Rhea" id="RHEA-COMP:9613"/>
        <dbReference type="Rhea" id="RHEA-COMP:9622"/>
        <dbReference type="ChEBI" id="CHEBI:30616"/>
        <dbReference type="ChEBI" id="CHEBI:33019"/>
        <dbReference type="ChEBI" id="CHEBI:57427"/>
        <dbReference type="ChEBI" id="CHEBI:78442"/>
        <dbReference type="ChEBI" id="CHEBI:78494"/>
        <dbReference type="ChEBI" id="CHEBI:456215"/>
        <dbReference type="EC" id="6.1.1.4"/>
    </reaction>
</comment>
<comment type="subcellular location">
    <subcellularLocation>
        <location evidence="1">Cytoplasm</location>
    </subcellularLocation>
</comment>
<comment type="similarity">
    <text evidence="1">Belongs to the class-I aminoacyl-tRNA synthetase family.</text>
</comment>
<dbReference type="EC" id="6.1.1.4" evidence="1"/>
<dbReference type="EMBL" id="CP000826">
    <property type="protein sequence ID" value="ABV40311.1"/>
    <property type="molecule type" value="Genomic_DNA"/>
</dbReference>
<dbReference type="SMR" id="A8GB21"/>
<dbReference type="STRING" id="399741.Spro_1207"/>
<dbReference type="KEGG" id="spe:Spro_1207"/>
<dbReference type="eggNOG" id="COG0495">
    <property type="taxonomic scope" value="Bacteria"/>
</dbReference>
<dbReference type="HOGENOM" id="CLU_004427_0_0_6"/>
<dbReference type="OrthoDB" id="9810365at2"/>
<dbReference type="GO" id="GO:0005829">
    <property type="term" value="C:cytosol"/>
    <property type="evidence" value="ECO:0007669"/>
    <property type="project" value="TreeGrafter"/>
</dbReference>
<dbReference type="GO" id="GO:0002161">
    <property type="term" value="F:aminoacyl-tRNA deacylase activity"/>
    <property type="evidence" value="ECO:0007669"/>
    <property type="project" value="InterPro"/>
</dbReference>
<dbReference type="GO" id="GO:0005524">
    <property type="term" value="F:ATP binding"/>
    <property type="evidence" value="ECO:0007669"/>
    <property type="project" value="UniProtKB-UniRule"/>
</dbReference>
<dbReference type="GO" id="GO:0004823">
    <property type="term" value="F:leucine-tRNA ligase activity"/>
    <property type="evidence" value="ECO:0007669"/>
    <property type="project" value="UniProtKB-UniRule"/>
</dbReference>
<dbReference type="GO" id="GO:0006429">
    <property type="term" value="P:leucyl-tRNA aminoacylation"/>
    <property type="evidence" value="ECO:0007669"/>
    <property type="project" value="UniProtKB-UniRule"/>
</dbReference>
<dbReference type="CDD" id="cd07958">
    <property type="entry name" value="Anticodon_Ia_Leu_BEm"/>
    <property type="match status" value="1"/>
</dbReference>
<dbReference type="CDD" id="cd00812">
    <property type="entry name" value="LeuRS_core"/>
    <property type="match status" value="1"/>
</dbReference>
<dbReference type="FunFam" id="1.10.730.10:FF:000002">
    <property type="entry name" value="Leucine--tRNA ligase"/>
    <property type="match status" value="2"/>
</dbReference>
<dbReference type="FunFam" id="2.20.28.290:FF:000001">
    <property type="entry name" value="Leucine--tRNA ligase"/>
    <property type="match status" value="1"/>
</dbReference>
<dbReference type="FunFam" id="3.10.20.590:FF:000001">
    <property type="entry name" value="Leucine--tRNA ligase"/>
    <property type="match status" value="1"/>
</dbReference>
<dbReference type="FunFam" id="3.40.50.620:FF:000003">
    <property type="entry name" value="Leucine--tRNA ligase"/>
    <property type="match status" value="1"/>
</dbReference>
<dbReference type="FunFam" id="3.40.50.620:FF:000124">
    <property type="entry name" value="Leucine--tRNA ligase"/>
    <property type="match status" value="1"/>
</dbReference>
<dbReference type="FunFam" id="3.90.740.10:FF:000012">
    <property type="entry name" value="Leucine--tRNA ligase"/>
    <property type="match status" value="1"/>
</dbReference>
<dbReference type="Gene3D" id="2.20.28.290">
    <property type="match status" value="1"/>
</dbReference>
<dbReference type="Gene3D" id="3.10.20.590">
    <property type="match status" value="1"/>
</dbReference>
<dbReference type="Gene3D" id="3.40.50.620">
    <property type="entry name" value="HUPs"/>
    <property type="match status" value="1"/>
</dbReference>
<dbReference type="Gene3D" id="1.10.730.10">
    <property type="entry name" value="Isoleucyl-tRNA Synthetase, Domain 1"/>
    <property type="match status" value="1"/>
</dbReference>
<dbReference type="Gene3D" id="3.90.740.10">
    <property type="entry name" value="Valyl/Leucyl/Isoleucyl-tRNA synthetase, editing domain"/>
    <property type="match status" value="1"/>
</dbReference>
<dbReference type="HAMAP" id="MF_00049_B">
    <property type="entry name" value="Leu_tRNA_synth_B"/>
    <property type="match status" value="1"/>
</dbReference>
<dbReference type="InterPro" id="IPR001412">
    <property type="entry name" value="aa-tRNA-synth_I_CS"/>
</dbReference>
<dbReference type="InterPro" id="IPR002300">
    <property type="entry name" value="aa-tRNA-synth_Ia"/>
</dbReference>
<dbReference type="InterPro" id="IPR002302">
    <property type="entry name" value="Leu-tRNA-ligase"/>
</dbReference>
<dbReference type="InterPro" id="IPR025709">
    <property type="entry name" value="Leu_tRNA-synth_edit"/>
</dbReference>
<dbReference type="InterPro" id="IPR013155">
    <property type="entry name" value="M/V/L/I-tRNA-synth_anticd-bd"/>
</dbReference>
<dbReference type="InterPro" id="IPR015413">
    <property type="entry name" value="Methionyl/Leucyl_tRNA_Synth"/>
</dbReference>
<dbReference type="InterPro" id="IPR014729">
    <property type="entry name" value="Rossmann-like_a/b/a_fold"/>
</dbReference>
<dbReference type="InterPro" id="IPR009080">
    <property type="entry name" value="tRNAsynth_Ia_anticodon-bd"/>
</dbReference>
<dbReference type="InterPro" id="IPR009008">
    <property type="entry name" value="Val/Leu/Ile-tRNA-synth_edit"/>
</dbReference>
<dbReference type="NCBIfam" id="TIGR00396">
    <property type="entry name" value="leuS_bact"/>
    <property type="match status" value="1"/>
</dbReference>
<dbReference type="PANTHER" id="PTHR43740:SF2">
    <property type="entry name" value="LEUCINE--TRNA LIGASE, MITOCHONDRIAL"/>
    <property type="match status" value="1"/>
</dbReference>
<dbReference type="PANTHER" id="PTHR43740">
    <property type="entry name" value="LEUCYL-TRNA SYNTHETASE"/>
    <property type="match status" value="1"/>
</dbReference>
<dbReference type="Pfam" id="PF08264">
    <property type="entry name" value="Anticodon_1"/>
    <property type="match status" value="1"/>
</dbReference>
<dbReference type="Pfam" id="PF00133">
    <property type="entry name" value="tRNA-synt_1"/>
    <property type="match status" value="2"/>
</dbReference>
<dbReference type="Pfam" id="PF13603">
    <property type="entry name" value="tRNA-synt_1_2"/>
    <property type="match status" value="1"/>
</dbReference>
<dbReference type="Pfam" id="PF09334">
    <property type="entry name" value="tRNA-synt_1g"/>
    <property type="match status" value="1"/>
</dbReference>
<dbReference type="PRINTS" id="PR00985">
    <property type="entry name" value="TRNASYNTHLEU"/>
</dbReference>
<dbReference type="SUPFAM" id="SSF47323">
    <property type="entry name" value="Anticodon-binding domain of a subclass of class I aminoacyl-tRNA synthetases"/>
    <property type="match status" value="1"/>
</dbReference>
<dbReference type="SUPFAM" id="SSF52374">
    <property type="entry name" value="Nucleotidylyl transferase"/>
    <property type="match status" value="1"/>
</dbReference>
<dbReference type="SUPFAM" id="SSF50677">
    <property type="entry name" value="ValRS/IleRS/LeuRS editing domain"/>
    <property type="match status" value="1"/>
</dbReference>
<dbReference type="PROSITE" id="PS00178">
    <property type="entry name" value="AA_TRNA_LIGASE_I"/>
    <property type="match status" value="1"/>
</dbReference>
<proteinExistence type="inferred from homology"/>
<evidence type="ECO:0000255" key="1">
    <source>
        <dbReference type="HAMAP-Rule" id="MF_00049"/>
    </source>
</evidence>
<sequence length="860" mass="97024">MQEQYRPEDIESNVQLHWQEKQTFKVTEDASKEKYYCLSMLPYPSGRLHMGHVRNYTIGDVISRYQRMLGKNVLQPIGWDAFGLPAEGAAVKNNTAPAPWTYDNIEYMKNQLKLLGFGYDWDREIATCDPDYYRWEQWFFTKLYEKGLVYKKTSAVNWCPHDLTVLANEQVIDGCCWRCDTKVERKEIPQWFIKITDYADQLLNDLDTLESWPEQVKTMQRNWIGRSEGVDITFDVAGSDEKLTVYTTRPDTFMGATYVAVAAGHPLAQQGAVNNPALAEFIEECRNTKVAEAEMATMEKKGMPTGLFAIHPLSGEQVPVWVANFVLMEYGTGAVMAVPAHDQRDWEFATKYGLPIKPVVLALDGSQPDVQAEAMTEKGTLFNSGEFDGLDHQDGFNAIADKLVAKGVGQRKVNYRLRDWGVSRQRYWGAPIPMVTLEDGTVMPTPEDQLPVILPEDVVMDGITSPIKADPEWAKTTVNGQPALRETDTFDTFMESSWYYARYTCPQYDKGMLDPAAANYWLPVDQYVGGIEHAIMHLMYFRFFHKLLRDAGLVDSDEPAKRLLCQGMVLADAFYYSGNSGERVWVSPADAIVERDDKGRIIKATDPQGRELVYAGMSKMSKSKNNGIDPQVMVEKYGADTVRLFMMFASPAEMTLEWQESGVEGANRFLKRVWKLSYEHLEKGAVQPLNVATLTEDQKALRRDLHKTIAKVTDDIGRRQTFNTAIAAVMELMNKLARAPQESEQDRALLQEALLAVVRMLYPFTPHVCFSLWQALGGEGDVDTAAWPQADEQAMVEDSKLVVVQVNGKVRAKITVAADATEEQVRARAAEEHLVAKYLDGVTVRKVIYVPGKLLNLVVG</sequence>
<feature type="chain" id="PRO_1000057348" description="Leucine--tRNA ligase">
    <location>
        <begin position="1"/>
        <end position="860"/>
    </location>
</feature>
<feature type="short sequence motif" description="'HIGH' region">
    <location>
        <begin position="42"/>
        <end position="52"/>
    </location>
</feature>
<feature type="short sequence motif" description="'KMSKS' region">
    <location>
        <begin position="619"/>
        <end position="623"/>
    </location>
</feature>
<feature type="binding site" evidence="1">
    <location>
        <position position="622"/>
    </location>
    <ligand>
        <name>ATP</name>
        <dbReference type="ChEBI" id="CHEBI:30616"/>
    </ligand>
</feature>